<accession>P10379</accession>
<accession>Q960B4</accession>
<accession>Q9W0W7</accession>
<comment type="function">
    <text>Required for normal axon patterning during neurogenesis.</text>
</comment>
<comment type="subcellular location">
    <subcellularLocation>
        <location>Membrane</location>
        <topology>Single-pass type I membrane protein</topology>
    </subcellularLocation>
</comment>
<sequence>MTSNSCLISLGLLLVLIQILAPAKAAEHSVFTHKNASSVLGQLVTSSTLVWESYDPKDATQLQFAVEGGKYVTEDEHYPMYVCRVPIDGIQVSGHTEKILQRHVCLAAHYKHGKYDNFDVLMNKGHLGKVGWRHWRKFDAGVPVGAIRIGDDSYIGRHRAPSQPNKDGVVTHWGADFNLGHLEPVGLGKIRVIEAEREKYYDDGEVLVETEPFRYELRDIKLDRLRTDIQENMTELVTRKLENLEDKYSTVETILSYTFNYNQYWGSHEGVARGLPTKIFEKDEAVPAEINWALKHTEKRSENKAVHTKLWPGTAINVTLRGNYVTLEAPYSGKLFAFYYGSDESVSRKISAEVRKSYLKEVKLEFSPVYWIENGTLVPTTTTTTTTSTSTTTHATTTSTNEPTPINEPPLVHMKDNGVQHSGPDTLEKTLHDSPSSNELNSHEAPENMSSDPGKDVALAGFGVNAAGSTFIAGSALLTLLLTIFLSL</sequence>
<dbReference type="EMBL" id="X07450">
    <property type="protein sequence ID" value="CAA30332.1"/>
    <property type="molecule type" value="mRNA"/>
</dbReference>
<dbReference type="EMBL" id="AE013599">
    <property type="protein sequence ID" value="AAF47312.2"/>
    <property type="molecule type" value="Genomic_DNA"/>
</dbReference>
<dbReference type="EMBL" id="AY052139">
    <property type="protein sequence ID" value="AAK93563.1"/>
    <property type="molecule type" value="mRNA"/>
</dbReference>
<dbReference type="PIR" id="S00483">
    <property type="entry name" value="EPFF"/>
</dbReference>
<dbReference type="RefSeq" id="NP_001286875.1">
    <property type="nucleotide sequence ID" value="NM_001299946.1"/>
</dbReference>
<dbReference type="RefSeq" id="NP_523861.1">
    <property type="nucleotide sequence ID" value="NM_079137.3"/>
</dbReference>
<dbReference type="SMR" id="P10379"/>
<dbReference type="BioGRID" id="63570">
    <property type="interactions" value="15"/>
</dbReference>
<dbReference type="DIP" id="DIP-18057N"/>
<dbReference type="FunCoup" id="P10379">
    <property type="interactions" value="172"/>
</dbReference>
<dbReference type="IntAct" id="P10379">
    <property type="interactions" value="6"/>
</dbReference>
<dbReference type="STRING" id="7227.FBpp0311729"/>
<dbReference type="GlyCosmos" id="P10379">
    <property type="glycosylation" value="5 sites, No reported glycans"/>
</dbReference>
<dbReference type="GlyGen" id="P10379">
    <property type="glycosylation" value="5 sites"/>
</dbReference>
<dbReference type="iPTMnet" id="P10379"/>
<dbReference type="PaxDb" id="7227-FBpp0072304"/>
<dbReference type="DNASU" id="38002"/>
<dbReference type="EnsemblMetazoa" id="FBtr0072397">
    <property type="protein sequence ID" value="FBpp0072304"/>
    <property type="gene ID" value="FBgn0004055"/>
</dbReference>
<dbReference type="EnsemblMetazoa" id="FBtr0345678">
    <property type="protein sequence ID" value="FBpp0311729"/>
    <property type="gene ID" value="FBgn0004055"/>
</dbReference>
<dbReference type="GeneID" id="38002"/>
<dbReference type="KEGG" id="dme:Dmel_CG3533"/>
<dbReference type="UCSC" id="CG3533-RA">
    <property type="organism name" value="d. melanogaster"/>
</dbReference>
<dbReference type="AGR" id="FB:FBgn0004055"/>
<dbReference type="CTD" id="38002"/>
<dbReference type="FlyBase" id="FBgn0004055">
    <property type="gene designation" value="uzip"/>
</dbReference>
<dbReference type="VEuPathDB" id="VectorBase:FBgn0004055"/>
<dbReference type="eggNOG" id="ENOG502RY58">
    <property type="taxonomic scope" value="Eukaryota"/>
</dbReference>
<dbReference type="HOGENOM" id="CLU_037895_1_0_1"/>
<dbReference type="InParanoid" id="P10379"/>
<dbReference type="OMA" id="PENMSSK"/>
<dbReference type="OrthoDB" id="428159at2759"/>
<dbReference type="PhylomeDB" id="P10379"/>
<dbReference type="BioGRID-ORCS" id="38002">
    <property type="hits" value="0 hits in 1 CRISPR screen"/>
</dbReference>
<dbReference type="ChiTaRS" id="uzip">
    <property type="organism name" value="fly"/>
</dbReference>
<dbReference type="GenomeRNAi" id="38002"/>
<dbReference type="PRO" id="PR:P10379"/>
<dbReference type="Proteomes" id="UP000000803">
    <property type="component" value="Chromosome 2R"/>
</dbReference>
<dbReference type="Bgee" id="FBgn0004055">
    <property type="expression patterns" value="Expressed in second segment of antenna (Drosophila) and 197 other cell types or tissues"/>
</dbReference>
<dbReference type="ExpressionAtlas" id="P10379">
    <property type="expression patterns" value="baseline and differential"/>
</dbReference>
<dbReference type="GO" id="GO:0005737">
    <property type="term" value="C:cytoplasm"/>
    <property type="evidence" value="ECO:0000318"/>
    <property type="project" value="GO_Central"/>
</dbReference>
<dbReference type="GO" id="GO:0005886">
    <property type="term" value="C:plasma membrane"/>
    <property type="evidence" value="ECO:0007005"/>
    <property type="project" value="FlyBase"/>
</dbReference>
<dbReference type="GO" id="GO:0007411">
    <property type="term" value="P:axon guidance"/>
    <property type="evidence" value="ECO:0000315"/>
    <property type="project" value="FlyBase"/>
</dbReference>
<dbReference type="GO" id="GO:0007413">
    <property type="term" value="P:axonal fasciculation"/>
    <property type="evidence" value="ECO:0000315"/>
    <property type="project" value="FlyBase"/>
</dbReference>
<dbReference type="CDD" id="cd20233">
    <property type="entry name" value="PFM_unzipped-like"/>
    <property type="match status" value="1"/>
</dbReference>
<dbReference type="PANTHER" id="PTHR31649">
    <property type="entry name" value="AGAP009604-PA"/>
    <property type="match status" value="1"/>
</dbReference>
<dbReference type="PANTHER" id="PTHR31649:SF11">
    <property type="entry name" value="PROTEIN UNZIPPED"/>
    <property type="match status" value="1"/>
</dbReference>
<reference key="1">
    <citation type="journal article" date="1988" name="EMBO J.">
        <title>Zipper encodes a putative integral membrane protein required for normal axon patterning during Drosophila neurogenesis.</title>
        <authorList>
            <person name="Zhao D.-B."/>
            <person name="Code S."/>
            <person name="Jaehnig F."/>
            <person name="Haller J."/>
            <person name="Jaeckle H."/>
        </authorList>
    </citation>
    <scope>NUCLEOTIDE SEQUENCE [MRNA]</scope>
</reference>
<reference key="2">
    <citation type="journal article" date="2000" name="Science">
        <title>The genome sequence of Drosophila melanogaster.</title>
        <authorList>
            <person name="Adams M.D."/>
            <person name="Celniker S.E."/>
            <person name="Holt R.A."/>
            <person name="Evans C.A."/>
            <person name="Gocayne J.D."/>
            <person name="Amanatides P.G."/>
            <person name="Scherer S.E."/>
            <person name="Li P.W."/>
            <person name="Hoskins R.A."/>
            <person name="Galle R.F."/>
            <person name="George R.A."/>
            <person name="Lewis S.E."/>
            <person name="Richards S."/>
            <person name="Ashburner M."/>
            <person name="Henderson S.N."/>
            <person name="Sutton G.G."/>
            <person name="Wortman J.R."/>
            <person name="Yandell M.D."/>
            <person name="Zhang Q."/>
            <person name="Chen L.X."/>
            <person name="Brandon R.C."/>
            <person name="Rogers Y.-H.C."/>
            <person name="Blazej R.G."/>
            <person name="Champe M."/>
            <person name="Pfeiffer B.D."/>
            <person name="Wan K.H."/>
            <person name="Doyle C."/>
            <person name="Baxter E.G."/>
            <person name="Helt G."/>
            <person name="Nelson C.R."/>
            <person name="Miklos G.L.G."/>
            <person name="Abril J.F."/>
            <person name="Agbayani A."/>
            <person name="An H.-J."/>
            <person name="Andrews-Pfannkoch C."/>
            <person name="Baldwin D."/>
            <person name="Ballew R.M."/>
            <person name="Basu A."/>
            <person name="Baxendale J."/>
            <person name="Bayraktaroglu L."/>
            <person name="Beasley E.M."/>
            <person name="Beeson K.Y."/>
            <person name="Benos P.V."/>
            <person name="Berman B.P."/>
            <person name="Bhandari D."/>
            <person name="Bolshakov S."/>
            <person name="Borkova D."/>
            <person name="Botchan M.R."/>
            <person name="Bouck J."/>
            <person name="Brokstein P."/>
            <person name="Brottier P."/>
            <person name="Burtis K.C."/>
            <person name="Busam D.A."/>
            <person name="Butler H."/>
            <person name="Cadieu E."/>
            <person name="Center A."/>
            <person name="Chandra I."/>
            <person name="Cherry J.M."/>
            <person name="Cawley S."/>
            <person name="Dahlke C."/>
            <person name="Davenport L.B."/>
            <person name="Davies P."/>
            <person name="de Pablos B."/>
            <person name="Delcher A."/>
            <person name="Deng Z."/>
            <person name="Mays A.D."/>
            <person name="Dew I."/>
            <person name="Dietz S.M."/>
            <person name="Dodson K."/>
            <person name="Doup L.E."/>
            <person name="Downes M."/>
            <person name="Dugan-Rocha S."/>
            <person name="Dunkov B.C."/>
            <person name="Dunn P."/>
            <person name="Durbin K.J."/>
            <person name="Evangelista C.C."/>
            <person name="Ferraz C."/>
            <person name="Ferriera S."/>
            <person name="Fleischmann W."/>
            <person name="Fosler C."/>
            <person name="Gabrielian A.E."/>
            <person name="Garg N.S."/>
            <person name="Gelbart W.M."/>
            <person name="Glasser K."/>
            <person name="Glodek A."/>
            <person name="Gong F."/>
            <person name="Gorrell J.H."/>
            <person name="Gu Z."/>
            <person name="Guan P."/>
            <person name="Harris M."/>
            <person name="Harris N.L."/>
            <person name="Harvey D.A."/>
            <person name="Heiman T.J."/>
            <person name="Hernandez J.R."/>
            <person name="Houck J."/>
            <person name="Hostin D."/>
            <person name="Houston K.A."/>
            <person name="Howland T.J."/>
            <person name="Wei M.-H."/>
            <person name="Ibegwam C."/>
            <person name="Jalali M."/>
            <person name="Kalush F."/>
            <person name="Karpen G.H."/>
            <person name="Ke Z."/>
            <person name="Kennison J.A."/>
            <person name="Ketchum K.A."/>
            <person name="Kimmel B.E."/>
            <person name="Kodira C.D."/>
            <person name="Kraft C.L."/>
            <person name="Kravitz S."/>
            <person name="Kulp D."/>
            <person name="Lai Z."/>
            <person name="Lasko P."/>
            <person name="Lei Y."/>
            <person name="Levitsky A.A."/>
            <person name="Li J.H."/>
            <person name="Li Z."/>
            <person name="Liang Y."/>
            <person name="Lin X."/>
            <person name="Liu X."/>
            <person name="Mattei B."/>
            <person name="McIntosh T.C."/>
            <person name="McLeod M.P."/>
            <person name="McPherson D."/>
            <person name="Merkulov G."/>
            <person name="Milshina N.V."/>
            <person name="Mobarry C."/>
            <person name="Morris J."/>
            <person name="Moshrefi A."/>
            <person name="Mount S.M."/>
            <person name="Moy M."/>
            <person name="Murphy B."/>
            <person name="Murphy L."/>
            <person name="Muzny D.M."/>
            <person name="Nelson D.L."/>
            <person name="Nelson D.R."/>
            <person name="Nelson K.A."/>
            <person name="Nixon K."/>
            <person name="Nusskern D.R."/>
            <person name="Pacleb J.M."/>
            <person name="Palazzolo M."/>
            <person name="Pittman G.S."/>
            <person name="Pan S."/>
            <person name="Pollard J."/>
            <person name="Puri V."/>
            <person name="Reese M.G."/>
            <person name="Reinert K."/>
            <person name="Remington K."/>
            <person name="Saunders R.D.C."/>
            <person name="Scheeler F."/>
            <person name="Shen H."/>
            <person name="Shue B.C."/>
            <person name="Siden-Kiamos I."/>
            <person name="Simpson M."/>
            <person name="Skupski M.P."/>
            <person name="Smith T.J."/>
            <person name="Spier E."/>
            <person name="Spradling A.C."/>
            <person name="Stapleton M."/>
            <person name="Strong R."/>
            <person name="Sun E."/>
            <person name="Svirskas R."/>
            <person name="Tector C."/>
            <person name="Turner R."/>
            <person name="Venter E."/>
            <person name="Wang A.H."/>
            <person name="Wang X."/>
            <person name="Wang Z.-Y."/>
            <person name="Wassarman D.A."/>
            <person name="Weinstock G.M."/>
            <person name="Weissenbach J."/>
            <person name="Williams S.M."/>
            <person name="Woodage T."/>
            <person name="Worley K.C."/>
            <person name="Wu D."/>
            <person name="Yang S."/>
            <person name="Yao Q.A."/>
            <person name="Ye J."/>
            <person name="Yeh R.-F."/>
            <person name="Zaveri J.S."/>
            <person name="Zhan M."/>
            <person name="Zhang G."/>
            <person name="Zhao Q."/>
            <person name="Zheng L."/>
            <person name="Zheng X.H."/>
            <person name="Zhong F.N."/>
            <person name="Zhong W."/>
            <person name="Zhou X."/>
            <person name="Zhu S.C."/>
            <person name="Zhu X."/>
            <person name="Smith H.O."/>
            <person name="Gibbs R.A."/>
            <person name="Myers E.W."/>
            <person name="Rubin G.M."/>
            <person name="Venter J.C."/>
        </authorList>
    </citation>
    <scope>NUCLEOTIDE SEQUENCE [LARGE SCALE GENOMIC DNA]</scope>
    <source>
        <strain>Berkeley</strain>
    </source>
</reference>
<reference key="3">
    <citation type="journal article" date="2002" name="Genome Biol.">
        <title>Annotation of the Drosophila melanogaster euchromatic genome: a systematic review.</title>
        <authorList>
            <person name="Misra S."/>
            <person name="Crosby M.A."/>
            <person name="Mungall C.J."/>
            <person name="Matthews B.B."/>
            <person name="Campbell K.S."/>
            <person name="Hradecky P."/>
            <person name="Huang Y."/>
            <person name="Kaminker J.S."/>
            <person name="Millburn G.H."/>
            <person name="Prochnik S.E."/>
            <person name="Smith C.D."/>
            <person name="Tupy J.L."/>
            <person name="Whitfield E.J."/>
            <person name="Bayraktaroglu L."/>
            <person name="Berman B.P."/>
            <person name="Bettencourt B.R."/>
            <person name="Celniker S.E."/>
            <person name="de Grey A.D.N.J."/>
            <person name="Drysdale R.A."/>
            <person name="Harris N.L."/>
            <person name="Richter J."/>
            <person name="Russo S."/>
            <person name="Schroeder A.J."/>
            <person name="Shu S.Q."/>
            <person name="Stapleton M."/>
            <person name="Yamada C."/>
            <person name="Ashburner M."/>
            <person name="Gelbart W.M."/>
            <person name="Rubin G.M."/>
            <person name="Lewis S.E."/>
        </authorList>
    </citation>
    <scope>GENOME REANNOTATION</scope>
    <source>
        <strain>Berkeley</strain>
    </source>
</reference>
<reference key="4">
    <citation type="journal article" date="2002" name="Genome Biol.">
        <title>A Drosophila full-length cDNA resource.</title>
        <authorList>
            <person name="Stapleton M."/>
            <person name="Carlson J.W."/>
            <person name="Brokstein P."/>
            <person name="Yu C."/>
            <person name="Champe M."/>
            <person name="George R.A."/>
            <person name="Guarin H."/>
            <person name="Kronmiller B."/>
            <person name="Pacleb J.M."/>
            <person name="Park S."/>
            <person name="Wan K.H."/>
            <person name="Rubin G.M."/>
            <person name="Celniker S.E."/>
        </authorList>
    </citation>
    <scope>NUCLEOTIDE SEQUENCE [LARGE SCALE MRNA]</scope>
    <source>
        <strain>Berkeley</strain>
        <tissue>Embryo</tissue>
    </source>
</reference>
<reference key="5">
    <citation type="journal article" date="2007" name="Glycobiology">
        <title>Identification of N-glycosylated proteins from the central nervous system of Drosophila melanogaster.</title>
        <authorList>
            <person name="Koles K."/>
            <person name="Lim J.-M."/>
            <person name="Aoki K."/>
            <person name="Porterfield M."/>
            <person name="Tiemeyer M."/>
            <person name="Wells L."/>
            <person name="Panin V."/>
        </authorList>
    </citation>
    <scope>GLYCOSYLATION [LARGE SCALE ANALYSIS] AT ASN-232</scope>
    <scope>IDENTIFICATION BY MASS SPECTROMETRY</scope>
    <source>
        <strain>Oregon-R</strain>
        <tissue>Head</tissue>
    </source>
</reference>
<reference key="6">
    <citation type="journal article" date="2009" name="Nat. Biotechnol.">
        <title>Mass-spectrometric identification and relative quantification of N-linked cell surface glycoproteins.</title>
        <authorList>
            <person name="Wollscheid B."/>
            <person name="Bausch-Fluck D."/>
            <person name="Henderson C."/>
            <person name="O'Brien R."/>
            <person name="Bibel M."/>
            <person name="Schiess R."/>
            <person name="Aebersold R."/>
            <person name="Watts J.D."/>
        </authorList>
    </citation>
    <scope>GLYCOSYLATION [LARGE SCALE ANALYSIS] AT ASN-232</scope>
    <scope>IDENTIFICATION BY MASS SPECTROMETRY</scope>
</reference>
<protein>
    <recommendedName>
        <fullName>Protein unzipped</fullName>
    </recommendedName>
    <alternativeName>
        <fullName>Protein zipper</fullName>
    </alternativeName>
</protein>
<keyword id="KW-0217">Developmental protein</keyword>
<keyword id="KW-0221">Differentiation</keyword>
<keyword id="KW-0325">Glycoprotein</keyword>
<keyword id="KW-0472">Membrane</keyword>
<keyword id="KW-0524">Neurogenesis</keyword>
<keyword id="KW-1185">Reference proteome</keyword>
<keyword id="KW-0732">Signal</keyword>
<keyword id="KW-0812">Transmembrane</keyword>
<keyword id="KW-1133">Transmembrane helix</keyword>
<name>UZIP_DROME</name>
<evidence type="ECO:0000255" key="1"/>
<evidence type="ECO:0000256" key="2">
    <source>
        <dbReference type="SAM" id="MobiDB-lite"/>
    </source>
</evidence>
<evidence type="ECO:0000269" key="3">
    <source>
    </source>
</evidence>
<evidence type="ECO:0000269" key="4">
    <source>
    </source>
</evidence>
<evidence type="ECO:0000305" key="5"/>
<gene>
    <name type="primary">uzip</name>
    <name type="synonym">zip</name>
    <name type="ORF">CG3533</name>
</gene>
<organism>
    <name type="scientific">Drosophila melanogaster</name>
    <name type="common">Fruit fly</name>
    <dbReference type="NCBI Taxonomy" id="7227"/>
    <lineage>
        <taxon>Eukaryota</taxon>
        <taxon>Metazoa</taxon>
        <taxon>Ecdysozoa</taxon>
        <taxon>Arthropoda</taxon>
        <taxon>Hexapoda</taxon>
        <taxon>Insecta</taxon>
        <taxon>Pterygota</taxon>
        <taxon>Neoptera</taxon>
        <taxon>Endopterygota</taxon>
        <taxon>Diptera</taxon>
        <taxon>Brachycera</taxon>
        <taxon>Muscomorpha</taxon>
        <taxon>Ephydroidea</taxon>
        <taxon>Drosophilidae</taxon>
        <taxon>Drosophila</taxon>
        <taxon>Sophophora</taxon>
    </lineage>
</organism>
<feature type="signal peptide" evidence="1">
    <location>
        <begin position="1"/>
        <end position="21"/>
    </location>
</feature>
<feature type="chain" id="PRO_0000022645" description="Protein unzipped">
    <location>
        <begin position="22"/>
        <end position="488"/>
    </location>
</feature>
<feature type="topological domain" description="Extracellular" evidence="1">
    <location>
        <begin position="22"/>
        <end position="465"/>
    </location>
</feature>
<feature type="transmembrane region" description="Helical" evidence="1">
    <location>
        <begin position="466"/>
        <end position="486"/>
    </location>
</feature>
<feature type="topological domain" description="Cytoplasmic" evidence="1">
    <location>
        <begin position="487"/>
        <end position="488"/>
    </location>
</feature>
<feature type="region of interest" description="Disordered" evidence="2">
    <location>
        <begin position="380"/>
        <end position="453"/>
    </location>
</feature>
<feature type="compositionally biased region" description="Low complexity" evidence="2">
    <location>
        <begin position="380"/>
        <end position="400"/>
    </location>
</feature>
<feature type="glycosylation site" description="N-linked (GlcNAc...) asparagine" evidence="1">
    <location>
        <position position="35"/>
    </location>
</feature>
<feature type="glycosylation site" description="N-linked (GlcNAc...) asparagine" evidence="3 4">
    <location>
        <position position="232"/>
    </location>
</feature>
<feature type="glycosylation site" description="N-linked (GlcNAc...) asparagine" evidence="1">
    <location>
        <position position="317"/>
    </location>
</feature>
<feature type="glycosylation site" description="N-linked (GlcNAc...) asparagine" evidence="1">
    <location>
        <position position="374"/>
    </location>
</feature>
<feature type="glycosylation site" description="N-linked (GlcNAc...) asparagine" evidence="1">
    <location>
        <position position="448"/>
    </location>
</feature>
<feature type="sequence conflict" description="In Ref. 1; CAA30332." evidence="5" ref="1">
    <original>L</original>
    <variation>SVDEIELWTQYRV</variation>
    <location>
        <position position="488"/>
    </location>
</feature>
<proteinExistence type="evidence at protein level"/>